<dbReference type="EMBL" id="Z75714">
    <property type="protein sequence ID" value="CAB00064.2"/>
    <property type="molecule type" value="Genomic_DNA"/>
</dbReference>
<dbReference type="PIR" id="T27571">
    <property type="entry name" value="T27571"/>
</dbReference>
<dbReference type="RefSeq" id="NP_492709.2">
    <property type="nucleotide sequence ID" value="NM_060308.7"/>
</dbReference>
<dbReference type="SMR" id="Q23314"/>
<dbReference type="FunCoup" id="Q23314">
    <property type="interactions" value="2202"/>
</dbReference>
<dbReference type="STRING" id="6239.ZC434.4.1"/>
<dbReference type="PaxDb" id="6239-ZC434.4.1"/>
<dbReference type="PeptideAtlas" id="Q23314"/>
<dbReference type="EnsemblMetazoa" id="ZC434.4.1">
    <property type="protein sequence ID" value="ZC434.4.1"/>
    <property type="gene ID" value="WBGene00013892"/>
</dbReference>
<dbReference type="GeneID" id="172902"/>
<dbReference type="KEGG" id="cel:CELE_ZC434.4"/>
<dbReference type="UCSC" id="ZC434.4">
    <property type="organism name" value="c. elegans"/>
</dbReference>
<dbReference type="AGR" id="WB:WBGene00013892"/>
<dbReference type="CTD" id="172902"/>
<dbReference type="WormBase" id="ZC434.4">
    <property type="protein sequence ID" value="CE38014"/>
    <property type="gene ID" value="WBGene00013892"/>
</dbReference>
<dbReference type="eggNOG" id="KOG4008">
    <property type="taxonomic scope" value="Eukaryota"/>
</dbReference>
<dbReference type="GeneTree" id="ENSGT00390000018482"/>
<dbReference type="HOGENOM" id="CLU_970546_0_0_1"/>
<dbReference type="InParanoid" id="Q23314"/>
<dbReference type="OMA" id="TVTKSHY"/>
<dbReference type="OrthoDB" id="5390at2759"/>
<dbReference type="PhylomeDB" id="Q23314"/>
<dbReference type="Reactome" id="R-CEL-6791226">
    <property type="pathway name" value="Major pathway of rRNA processing in the nucleolus and cytosol"/>
</dbReference>
<dbReference type="PRO" id="PR:Q23314"/>
<dbReference type="Proteomes" id="UP000001940">
    <property type="component" value="Chromosome I"/>
</dbReference>
<dbReference type="Bgee" id="WBGene00013892">
    <property type="expression patterns" value="Expressed in germ line (C elegans) and 4 other cell types or tissues"/>
</dbReference>
<dbReference type="GO" id="GO:0032545">
    <property type="term" value="C:CURI complex"/>
    <property type="evidence" value="ECO:0000318"/>
    <property type="project" value="GO_Central"/>
</dbReference>
<dbReference type="GO" id="GO:0034456">
    <property type="term" value="C:UTP-C complex"/>
    <property type="evidence" value="ECO:0000318"/>
    <property type="project" value="GO_Central"/>
</dbReference>
<dbReference type="GO" id="GO:0000028">
    <property type="term" value="P:ribosomal small subunit assembly"/>
    <property type="evidence" value="ECO:0000318"/>
    <property type="project" value="GO_Central"/>
</dbReference>
<dbReference type="GO" id="GO:0006364">
    <property type="term" value="P:rRNA processing"/>
    <property type="evidence" value="ECO:0000318"/>
    <property type="project" value="GO_Central"/>
</dbReference>
<dbReference type="CDD" id="cd12951">
    <property type="entry name" value="RRP7_Rrp7A"/>
    <property type="match status" value="1"/>
</dbReference>
<dbReference type="Gene3D" id="6.10.250.1770">
    <property type="match status" value="1"/>
</dbReference>
<dbReference type="InterPro" id="IPR040446">
    <property type="entry name" value="RRP7"/>
</dbReference>
<dbReference type="InterPro" id="IPR024326">
    <property type="entry name" value="RRP7_C"/>
</dbReference>
<dbReference type="PANTHER" id="PTHR13191">
    <property type="entry name" value="RIBOSOMAL RNA PROCESSING PROTEIN 7-RELATED"/>
    <property type="match status" value="1"/>
</dbReference>
<dbReference type="PANTHER" id="PTHR13191:SF0">
    <property type="entry name" value="RIBOSOMAL RNA-PROCESSING PROTEIN 7 HOMOLOG A-RELATED"/>
    <property type="match status" value="1"/>
</dbReference>
<dbReference type="Pfam" id="PF12923">
    <property type="entry name" value="RRP7"/>
    <property type="match status" value="1"/>
</dbReference>
<accession>Q23314</accession>
<name>RRP7_CAEEL</name>
<protein>
    <recommendedName>
        <fullName>Ribosomal RNA-processing protein 7 homolog</fullName>
    </recommendedName>
</protein>
<keyword id="KW-0175">Coiled coil</keyword>
<keyword id="KW-1185">Reference proteome</keyword>
<feature type="chain" id="PRO_0000065499" description="Ribosomal RNA-processing protein 7 homolog">
    <location>
        <begin position="1"/>
        <end position="270"/>
    </location>
</feature>
<feature type="coiled-coil region" evidence="1">
    <location>
        <begin position="233"/>
        <end position="268"/>
    </location>
</feature>
<organism>
    <name type="scientific">Caenorhabditis elegans</name>
    <dbReference type="NCBI Taxonomy" id="6239"/>
    <lineage>
        <taxon>Eukaryota</taxon>
        <taxon>Metazoa</taxon>
        <taxon>Ecdysozoa</taxon>
        <taxon>Nematoda</taxon>
        <taxon>Chromadorea</taxon>
        <taxon>Rhabditida</taxon>
        <taxon>Rhabditina</taxon>
        <taxon>Rhabditomorpha</taxon>
        <taxon>Rhabditoidea</taxon>
        <taxon>Rhabditidae</taxon>
        <taxon>Peloderinae</taxon>
        <taxon>Caenorhabditis</taxon>
    </lineage>
</organism>
<reference key="1">
    <citation type="journal article" date="1998" name="Science">
        <title>Genome sequence of the nematode C. elegans: a platform for investigating biology.</title>
        <authorList>
            <consortium name="The C. elegans sequencing consortium"/>
        </authorList>
    </citation>
    <scope>NUCLEOTIDE SEQUENCE [LARGE SCALE GENOMIC DNA]</scope>
    <source>
        <strain>Bristol N2</strain>
    </source>
</reference>
<comment type="similarity">
    <text evidence="2">Belongs to the RRP7 family.</text>
</comment>
<evidence type="ECO:0000255" key="1"/>
<evidence type="ECO:0000305" key="2"/>
<gene>
    <name type="ORF">ZC434.4</name>
</gene>
<sequence length="270" mass="31215">MDCCKKKRVKKVAKRKSEKVIHLDPDALRYLRFRIGGKYMAERHMFLKKDPSKENSIIVSNIPAFVGEGVVLAIIDQFASFEVEESFVQRSNTADNSLSQGQLTMSITFDKPEAVIQTLALCQDVGPFTITDFLEDPEFPSVLKDSTTLYRKLFPSEEQIQEMADTYVERYDTEQTEARKEAKRKYSEPDEDGWITVTKAKKAAKSVKLKKEDVPLIGGLNNKKKKVDLAYYTFQIKKNRQEKAQELLKKFEEDRKRITQLKQARNFKPI</sequence>
<proteinExistence type="inferred from homology"/>